<gene>
    <name type="primary">EIF5</name>
</gene>
<name>IF5_PHAVU</name>
<feature type="chain" id="PRO_0000212525" description="Eukaryotic translation initiation factor 5">
    <location>
        <begin position="1"/>
        <end position="443"/>
    </location>
</feature>
<feature type="domain" description="W2" evidence="2">
    <location>
        <begin position="284"/>
        <end position="443"/>
    </location>
</feature>
<feature type="region of interest" description="Disordered" evidence="3">
    <location>
        <begin position="147"/>
        <end position="244"/>
    </location>
</feature>
<feature type="region of interest" description="Disordered" evidence="3">
    <location>
        <begin position="271"/>
        <end position="293"/>
    </location>
</feature>
<feature type="compositionally biased region" description="Basic and acidic residues" evidence="3">
    <location>
        <begin position="147"/>
        <end position="178"/>
    </location>
</feature>
<feature type="compositionally biased region" description="Basic residues" evidence="3">
    <location>
        <begin position="179"/>
        <end position="188"/>
    </location>
</feature>
<feature type="compositionally biased region" description="Basic and acidic residues" evidence="3">
    <location>
        <begin position="207"/>
        <end position="227"/>
    </location>
</feature>
<feature type="compositionally biased region" description="Acidic residues" evidence="3">
    <location>
        <begin position="228"/>
        <end position="237"/>
    </location>
</feature>
<feature type="compositionally biased region" description="Low complexity" evidence="3">
    <location>
        <begin position="280"/>
        <end position="291"/>
    </location>
</feature>
<feature type="binding site" evidence="1">
    <location>
        <begin position="29"/>
        <end position="36"/>
    </location>
    <ligand>
        <name>GTP</name>
        <dbReference type="ChEBI" id="CHEBI:37565"/>
    </ligand>
</feature>
<protein>
    <recommendedName>
        <fullName>Eukaryotic translation initiation factor 5</fullName>
        <shortName>eIF-5</shortName>
    </recommendedName>
</protein>
<evidence type="ECO:0000255" key="1"/>
<evidence type="ECO:0000255" key="2">
    <source>
        <dbReference type="PROSITE-ProRule" id="PRU00695"/>
    </source>
</evidence>
<evidence type="ECO:0000256" key="3">
    <source>
        <dbReference type="SAM" id="MobiDB-lite"/>
    </source>
</evidence>
<evidence type="ECO:0000305" key="4"/>
<comment type="function">
    <text>Catalyzes the hydrolysis of GTP bound to the 40S ribosomal initiation complex (40S.mRNA.Met-tRNA[F].eIF-2.GTP) with the subsequent joining of a 60S ribosomal subunit resulting in the release of eIF-2 and the guanine nucleotide. The subsequent joining of a 60S ribosomal subunit results in the formation of a functional 80S initiation complex (80S.mRNA.Met-tRNA[F]).</text>
</comment>
<comment type="similarity">
    <text evidence="4">Belongs to the eIF-2-beta/eIF-5 family.</text>
</comment>
<accession>P48724</accession>
<proteinExistence type="evidence at transcript level"/>
<keyword id="KW-0342">GTP-binding</keyword>
<keyword id="KW-0396">Initiation factor</keyword>
<keyword id="KW-0547">Nucleotide-binding</keyword>
<keyword id="KW-0648">Protein biosynthesis</keyword>
<reference key="1">
    <citation type="online journal article" date="1995" name="Plant Gene Register">
        <title>Nucleotide sequence of a cDNA encoding eukaryotic initiation factor 5 in bean.</title>
        <authorList>
            <person name="Floyd Z.E."/>
            <person name="Bartlett S.G."/>
        </authorList>
        <locator>PGR95-092</locator>
    </citation>
    <scope>NUCLEOTIDE SEQUENCE [MRNA]</scope>
</reference>
<organism>
    <name type="scientific">Phaseolus vulgaris</name>
    <name type="common">Kidney bean</name>
    <name type="synonym">French bean</name>
    <dbReference type="NCBI Taxonomy" id="3885"/>
    <lineage>
        <taxon>Eukaryota</taxon>
        <taxon>Viridiplantae</taxon>
        <taxon>Streptophyta</taxon>
        <taxon>Embryophyta</taxon>
        <taxon>Tracheophyta</taxon>
        <taxon>Spermatophyta</taxon>
        <taxon>Magnoliopsida</taxon>
        <taxon>eudicotyledons</taxon>
        <taxon>Gunneridae</taxon>
        <taxon>Pentapetalae</taxon>
        <taxon>rosids</taxon>
        <taxon>fabids</taxon>
        <taxon>Fabales</taxon>
        <taxon>Fabaceae</taxon>
        <taxon>Papilionoideae</taxon>
        <taxon>50 kb inversion clade</taxon>
        <taxon>NPAAA clade</taxon>
        <taxon>indigoferoid/millettioid clade</taxon>
        <taxon>Phaseoleae</taxon>
        <taxon>Phaseolus</taxon>
    </lineage>
</organism>
<dbReference type="EMBL" id="L47221">
    <property type="protein sequence ID" value="AAA92861.1"/>
    <property type="molecule type" value="mRNA"/>
</dbReference>
<dbReference type="PIR" id="T11804">
    <property type="entry name" value="T11804"/>
</dbReference>
<dbReference type="SMR" id="P48724"/>
<dbReference type="eggNOG" id="KOG2767">
    <property type="taxonomic scope" value="Eukaryota"/>
</dbReference>
<dbReference type="GO" id="GO:0005829">
    <property type="term" value="C:cytosol"/>
    <property type="evidence" value="ECO:0007669"/>
    <property type="project" value="TreeGrafter"/>
</dbReference>
<dbReference type="GO" id="GO:0071074">
    <property type="term" value="F:eukaryotic initiation factor eIF2 binding"/>
    <property type="evidence" value="ECO:0007669"/>
    <property type="project" value="TreeGrafter"/>
</dbReference>
<dbReference type="GO" id="GO:0005092">
    <property type="term" value="F:GDP-dissociation inhibitor activity"/>
    <property type="evidence" value="ECO:0007669"/>
    <property type="project" value="TreeGrafter"/>
</dbReference>
<dbReference type="GO" id="GO:0005525">
    <property type="term" value="F:GTP binding"/>
    <property type="evidence" value="ECO:0007669"/>
    <property type="project" value="UniProtKB-KW"/>
</dbReference>
<dbReference type="GO" id="GO:0003743">
    <property type="term" value="F:translation initiation factor activity"/>
    <property type="evidence" value="ECO:0007669"/>
    <property type="project" value="UniProtKB-KW"/>
</dbReference>
<dbReference type="GO" id="GO:0001732">
    <property type="term" value="P:formation of cytoplasmic translation initiation complex"/>
    <property type="evidence" value="ECO:0007669"/>
    <property type="project" value="TreeGrafter"/>
</dbReference>
<dbReference type="CDD" id="cd11561">
    <property type="entry name" value="W2_eIF5"/>
    <property type="match status" value="1"/>
</dbReference>
<dbReference type="FunFam" id="1.25.40.180:FF:000067">
    <property type="entry name" value="Eukaryotic translation initiation factor 5"/>
    <property type="match status" value="1"/>
</dbReference>
<dbReference type="FunFam" id="2.20.25.350:FF:000001">
    <property type="entry name" value="Eukaryotic translation initiation factor 5"/>
    <property type="match status" value="1"/>
</dbReference>
<dbReference type="FunFam" id="3.30.30.170:FF:000002">
    <property type="entry name" value="Eukaryotic translation initiation factor 5"/>
    <property type="match status" value="1"/>
</dbReference>
<dbReference type="Gene3D" id="1.25.40.180">
    <property type="match status" value="1"/>
</dbReference>
<dbReference type="Gene3D" id="2.20.25.350">
    <property type="match status" value="1"/>
</dbReference>
<dbReference type="Gene3D" id="3.30.30.170">
    <property type="match status" value="1"/>
</dbReference>
<dbReference type="InterPro" id="IPR016024">
    <property type="entry name" value="ARM-type_fold"/>
</dbReference>
<dbReference type="InterPro" id="IPR045196">
    <property type="entry name" value="IF2/IF5"/>
</dbReference>
<dbReference type="InterPro" id="IPR002735">
    <property type="entry name" value="Transl_init_fac_IF2/IF5_dom"/>
</dbReference>
<dbReference type="InterPro" id="IPR016189">
    <property type="entry name" value="Transl_init_fac_IF2/IF5_N"/>
</dbReference>
<dbReference type="InterPro" id="IPR016190">
    <property type="entry name" value="Transl_init_fac_IF2/IF5_Zn-bd"/>
</dbReference>
<dbReference type="InterPro" id="IPR003307">
    <property type="entry name" value="W2_domain"/>
</dbReference>
<dbReference type="PANTHER" id="PTHR23001">
    <property type="entry name" value="EUKARYOTIC TRANSLATION INITIATION FACTOR"/>
    <property type="match status" value="1"/>
</dbReference>
<dbReference type="PANTHER" id="PTHR23001:SF28">
    <property type="entry name" value="EUKARYOTIC TRANSLATION INITIATION FACTOR 5-2-RELATED"/>
    <property type="match status" value="1"/>
</dbReference>
<dbReference type="Pfam" id="PF01873">
    <property type="entry name" value="eIF-5_eIF-2B"/>
    <property type="match status" value="1"/>
</dbReference>
<dbReference type="Pfam" id="PF02020">
    <property type="entry name" value="W2"/>
    <property type="match status" value="1"/>
</dbReference>
<dbReference type="SMART" id="SM00653">
    <property type="entry name" value="eIF2B_5"/>
    <property type="match status" value="1"/>
</dbReference>
<dbReference type="SMART" id="SM00515">
    <property type="entry name" value="eIF5C"/>
    <property type="match status" value="1"/>
</dbReference>
<dbReference type="SUPFAM" id="SSF48371">
    <property type="entry name" value="ARM repeat"/>
    <property type="match status" value="1"/>
</dbReference>
<dbReference type="SUPFAM" id="SSF100966">
    <property type="entry name" value="Translation initiation factor 2 beta, aIF2beta, N-terminal domain"/>
    <property type="match status" value="1"/>
</dbReference>
<dbReference type="SUPFAM" id="SSF75689">
    <property type="entry name" value="Zinc-binding domain of translation initiation factor 2 beta"/>
    <property type="match status" value="1"/>
</dbReference>
<dbReference type="PROSITE" id="PS51363">
    <property type="entry name" value="W2"/>
    <property type="match status" value="1"/>
</dbReference>
<sequence>MALQNIGAGNSDDAFYRYKMPRMVTKIEGRGNGIKTNVVNMVDIAKRLARPASYTTKYFGCELGAQSKFDEKTGTSHVNGAHETAKLAGLLEIFIKKYVQCYGCGNPETEILITKNQMIQLKCAACGFVSDVDMRDKLTTFIVKNPPEVKKGSKDKKAMRRAEKERLKEGEAADEELKKVKKEVKKKGSSSAKDGTAKSTISKKKGSGSDEDRRSPTHKQIEEKEEAKDEDDDDDDGVQWLTDTSLDASRQRIKEQLSAVTADMVMLTTDEPEKKKKAASNQNGGSQNGNSKNYGTVVAEVKANLKKGFGASELLSHLAALPVPAQEKMSALVEALFEGTEKGFGRETLKKKNYFAAAVAEEGSQILLLHAIEEFCCKPNSNALKEVALVLKTLYDADVLEEEAIVLWYQKGLKGDNKNSKIWKNAQPFIDWLQNAESESDEE</sequence>